<dbReference type="EMBL" id="AM260479">
    <property type="protein sequence ID" value="CAJ93209.1"/>
    <property type="molecule type" value="Genomic_DNA"/>
</dbReference>
<dbReference type="RefSeq" id="WP_010810635.1">
    <property type="nucleotide sequence ID" value="NZ_CP039287.1"/>
</dbReference>
<dbReference type="SMR" id="Q0K9W2"/>
<dbReference type="STRING" id="381666.H16_A2110"/>
<dbReference type="KEGG" id="reh:H16_A2110"/>
<dbReference type="eggNOG" id="COG1495">
    <property type="taxonomic scope" value="Bacteria"/>
</dbReference>
<dbReference type="HOGENOM" id="CLU_098660_1_0_4"/>
<dbReference type="OrthoDB" id="3711263at2"/>
<dbReference type="Proteomes" id="UP000008210">
    <property type="component" value="Chromosome 1"/>
</dbReference>
<dbReference type="GO" id="GO:0005886">
    <property type="term" value="C:plasma membrane"/>
    <property type="evidence" value="ECO:0007669"/>
    <property type="project" value="UniProtKB-SubCell"/>
</dbReference>
<dbReference type="GO" id="GO:0009055">
    <property type="term" value="F:electron transfer activity"/>
    <property type="evidence" value="ECO:0007669"/>
    <property type="project" value="UniProtKB-UniRule"/>
</dbReference>
<dbReference type="GO" id="GO:0015035">
    <property type="term" value="F:protein-disulfide reductase activity"/>
    <property type="evidence" value="ECO:0007669"/>
    <property type="project" value="UniProtKB-UniRule"/>
</dbReference>
<dbReference type="GO" id="GO:0006457">
    <property type="term" value="P:protein folding"/>
    <property type="evidence" value="ECO:0007669"/>
    <property type="project" value="InterPro"/>
</dbReference>
<dbReference type="Gene3D" id="1.20.1550.10">
    <property type="entry name" value="DsbB-like"/>
    <property type="match status" value="1"/>
</dbReference>
<dbReference type="HAMAP" id="MF_00286">
    <property type="entry name" value="DsbB"/>
    <property type="match status" value="1"/>
</dbReference>
<dbReference type="InterPro" id="IPR003752">
    <property type="entry name" value="DiS_bond_form_DsbB/BdbC"/>
</dbReference>
<dbReference type="InterPro" id="IPR022920">
    <property type="entry name" value="Disulphide_bond_form_DsbB"/>
</dbReference>
<dbReference type="InterPro" id="IPR050183">
    <property type="entry name" value="DsbB"/>
</dbReference>
<dbReference type="InterPro" id="IPR023380">
    <property type="entry name" value="DsbB-like_sf"/>
</dbReference>
<dbReference type="NCBIfam" id="NF002552">
    <property type="entry name" value="PRK02110.1"/>
    <property type="match status" value="1"/>
</dbReference>
<dbReference type="PANTHER" id="PTHR36570">
    <property type="entry name" value="DISULFIDE BOND FORMATION PROTEIN B"/>
    <property type="match status" value="1"/>
</dbReference>
<dbReference type="PANTHER" id="PTHR36570:SF3">
    <property type="entry name" value="DISULFIDE BOND FORMATION PROTEIN B"/>
    <property type="match status" value="1"/>
</dbReference>
<dbReference type="Pfam" id="PF02600">
    <property type="entry name" value="DsbB"/>
    <property type="match status" value="1"/>
</dbReference>
<dbReference type="SUPFAM" id="SSF158442">
    <property type="entry name" value="DsbB-like"/>
    <property type="match status" value="1"/>
</dbReference>
<accession>Q0K9W2</accession>
<gene>
    <name evidence="1" type="primary">dsbB</name>
    <name type="ordered locus">H16_A2110</name>
</gene>
<feature type="chain" id="PRO_0000298399" description="Disulfide bond formation protein B">
    <location>
        <begin position="1"/>
        <end position="161"/>
    </location>
</feature>
<feature type="topological domain" description="Cytoplasmic" evidence="1">
    <location>
        <begin position="1"/>
        <end position="8"/>
    </location>
</feature>
<feature type="transmembrane region" description="Helical" evidence="1">
    <location>
        <begin position="9"/>
        <end position="25"/>
    </location>
</feature>
<feature type="topological domain" description="Periplasmic" evidence="1">
    <location>
        <begin position="26"/>
        <end position="43"/>
    </location>
</feature>
<feature type="transmembrane region" description="Helical" evidence="1">
    <location>
        <begin position="44"/>
        <end position="58"/>
    </location>
</feature>
<feature type="topological domain" description="Cytoplasmic" evidence="1">
    <location>
        <begin position="59"/>
        <end position="63"/>
    </location>
</feature>
<feature type="transmembrane region" description="Helical" evidence="1">
    <location>
        <begin position="64"/>
        <end position="81"/>
    </location>
</feature>
<feature type="topological domain" description="Periplasmic" evidence="1">
    <location>
        <begin position="82"/>
        <end position="136"/>
    </location>
</feature>
<feature type="transmembrane region" description="Helical" evidence="1">
    <location>
        <begin position="137"/>
        <end position="155"/>
    </location>
</feature>
<feature type="topological domain" description="Cytoplasmic" evidence="1">
    <location>
        <begin position="156"/>
        <end position="161"/>
    </location>
</feature>
<feature type="disulfide bond" description="Redox-active" evidence="1">
    <location>
        <begin position="35"/>
        <end position="38"/>
    </location>
</feature>
<feature type="disulfide bond" description="Redox-active" evidence="1">
    <location>
        <begin position="94"/>
        <end position="122"/>
    </location>
</feature>
<reference key="1">
    <citation type="journal article" date="2006" name="Nat. Biotechnol.">
        <title>Genome sequence of the bioplastic-producing 'Knallgas' bacterium Ralstonia eutropha H16.</title>
        <authorList>
            <person name="Pohlmann A."/>
            <person name="Fricke W.F."/>
            <person name="Reinecke F."/>
            <person name="Kusian B."/>
            <person name="Liesegang H."/>
            <person name="Cramm R."/>
            <person name="Eitinger T."/>
            <person name="Ewering C."/>
            <person name="Poetter M."/>
            <person name="Schwartz E."/>
            <person name="Strittmatter A."/>
            <person name="Voss I."/>
            <person name="Gottschalk G."/>
            <person name="Steinbuechel A."/>
            <person name="Friedrich B."/>
            <person name="Bowien B."/>
        </authorList>
    </citation>
    <scope>NUCLEOTIDE SEQUENCE [LARGE SCALE GENOMIC DNA]</scope>
    <source>
        <strain>ATCC 17699 / DSM 428 / KCTC 22496 / NCIMB 10442 / H16 / Stanier 337</strain>
    </source>
</reference>
<name>DSBB_CUPNH</name>
<protein>
    <recommendedName>
        <fullName evidence="1">Disulfide bond formation protein B</fullName>
    </recommendedName>
    <alternativeName>
        <fullName evidence="1">Disulfide oxidoreductase</fullName>
    </alternativeName>
</protein>
<comment type="function">
    <text evidence="1">Required for disulfide bond formation in some periplasmic proteins. Acts by oxidizing the DsbA protein.</text>
</comment>
<comment type="subcellular location">
    <subcellularLocation>
        <location evidence="1">Cell inner membrane</location>
        <topology evidence="1">Multi-pass membrane protein</topology>
    </subcellularLocation>
</comment>
<comment type="similarity">
    <text evidence="1">Belongs to the DsbB family.</text>
</comment>
<keyword id="KW-0997">Cell inner membrane</keyword>
<keyword id="KW-1003">Cell membrane</keyword>
<keyword id="KW-0143">Chaperone</keyword>
<keyword id="KW-1015">Disulfide bond</keyword>
<keyword id="KW-0249">Electron transport</keyword>
<keyword id="KW-0472">Membrane</keyword>
<keyword id="KW-0560">Oxidoreductase</keyword>
<keyword id="KW-0676">Redox-active center</keyword>
<keyword id="KW-1185">Reference proteome</keyword>
<keyword id="KW-0812">Transmembrane</keyword>
<keyword id="KW-1133">Transmembrane helix</keyword>
<keyword id="KW-0813">Transport</keyword>
<proteinExistence type="inferred from homology"/>
<sequence length="161" mass="17437">MQANSRAYFLLIALVSFGLVGVALYLQFEKGYQPCPLCVMQRFAFIGIGIFSLLAAVAQNTRSLWQGLGMLSGIAGIAVAVYHVSLLLNPKASCGIDPLENWVNALPTAKALPQVFYADGLCTAPLPPVLGLSVPAWSLIWLFILTLTLAVGLIRREKNFR</sequence>
<organism>
    <name type="scientific">Cupriavidus necator (strain ATCC 17699 / DSM 428 / KCTC 22496 / NCIMB 10442 / H16 / Stanier 337)</name>
    <name type="common">Ralstonia eutropha</name>
    <dbReference type="NCBI Taxonomy" id="381666"/>
    <lineage>
        <taxon>Bacteria</taxon>
        <taxon>Pseudomonadati</taxon>
        <taxon>Pseudomonadota</taxon>
        <taxon>Betaproteobacteria</taxon>
        <taxon>Burkholderiales</taxon>
        <taxon>Burkholderiaceae</taxon>
        <taxon>Cupriavidus</taxon>
    </lineage>
</organism>
<evidence type="ECO:0000255" key="1">
    <source>
        <dbReference type="HAMAP-Rule" id="MF_00286"/>
    </source>
</evidence>